<reference key="1">
    <citation type="submission" date="2007-11" db="EMBL/GenBank/DDBJ databases">
        <authorList>
            <consortium name="The Salmonella enterica serovar Paratyphi B Genome Sequencing Project"/>
            <person name="McClelland M."/>
            <person name="Sanderson E.K."/>
            <person name="Porwollik S."/>
            <person name="Spieth J."/>
            <person name="Clifton W.S."/>
            <person name="Fulton R."/>
            <person name="Cordes M."/>
            <person name="Wollam A."/>
            <person name="Shah N."/>
            <person name="Pepin K."/>
            <person name="Bhonagiri V."/>
            <person name="Nash W."/>
            <person name="Johnson M."/>
            <person name="Thiruvilangam P."/>
            <person name="Wilson R."/>
        </authorList>
    </citation>
    <scope>NUCLEOTIDE SEQUENCE [LARGE SCALE GENOMIC DNA]</scope>
    <source>
        <strain>ATCC BAA-1250 / SPB7</strain>
    </source>
</reference>
<organism>
    <name type="scientific">Salmonella paratyphi B (strain ATCC BAA-1250 / SPB7)</name>
    <dbReference type="NCBI Taxonomy" id="1016998"/>
    <lineage>
        <taxon>Bacteria</taxon>
        <taxon>Pseudomonadati</taxon>
        <taxon>Pseudomonadota</taxon>
        <taxon>Gammaproteobacteria</taxon>
        <taxon>Enterobacterales</taxon>
        <taxon>Enterobacteriaceae</taxon>
        <taxon>Salmonella</taxon>
    </lineage>
</organism>
<feature type="chain" id="PRO_1000074558" description="Phospho-N-acetylmuramoyl-pentapeptide-transferase">
    <location>
        <begin position="1"/>
        <end position="360"/>
    </location>
</feature>
<feature type="topological domain" description="Periplasmic" evidence="1">
    <location>
        <begin position="1"/>
        <end position="25"/>
    </location>
</feature>
<feature type="transmembrane region" description="Helical" evidence="1">
    <location>
        <begin position="26"/>
        <end position="46"/>
    </location>
</feature>
<feature type="topological domain" description="Cytoplasmic" evidence="1">
    <location>
        <begin position="47"/>
        <end position="71"/>
    </location>
</feature>
<feature type="transmembrane region" description="Helical" evidence="1">
    <location>
        <begin position="72"/>
        <end position="92"/>
    </location>
</feature>
<feature type="topological domain" description="Periplasmic" evidence="1">
    <location>
        <position position="93"/>
    </location>
</feature>
<feature type="transmembrane region" description="Helical" evidence="1">
    <location>
        <begin position="94"/>
        <end position="114"/>
    </location>
</feature>
<feature type="topological domain" description="Cytoplasmic" evidence="1">
    <location>
        <begin position="115"/>
        <end position="131"/>
    </location>
</feature>
<feature type="transmembrane region" description="Helical" evidence="1">
    <location>
        <begin position="132"/>
        <end position="152"/>
    </location>
</feature>
<feature type="topological domain" description="Periplasmic" evidence="1">
    <location>
        <begin position="153"/>
        <end position="167"/>
    </location>
</feature>
<feature type="transmembrane region" description="Helical" evidence="1">
    <location>
        <begin position="168"/>
        <end position="188"/>
    </location>
</feature>
<feature type="topological domain" description="Cytoplasmic" evidence="1">
    <location>
        <begin position="189"/>
        <end position="198"/>
    </location>
</feature>
<feature type="transmembrane region" description="Helical" evidence="1">
    <location>
        <begin position="199"/>
        <end position="219"/>
    </location>
</feature>
<feature type="topological domain" description="Periplasmic" evidence="1">
    <location>
        <begin position="220"/>
        <end position="235"/>
    </location>
</feature>
<feature type="transmembrane region" description="Helical" evidence="1">
    <location>
        <begin position="236"/>
        <end position="256"/>
    </location>
</feature>
<feature type="topological domain" description="Cytoplasmic" evidence="1">
    <location>
        <begin position="257"/>
        <end position="262"/>
    </location>
</feature>
<feature type="transmembrane region" description="Helical" evidence="1">
    <location>
        <begin position="263"/>
        <end position="283"/>
    </location>
</feature>
<feature type="topological domain" description="Periplasmic" evidence="1">
    <location>
        <begin position="284"/>
        <end position="287"/>
    </location>
</feature>
<feature type="transmembrane region" description="Helical" evidence="1">
    <location>
        <begin position="288"/>
        <end position="308"/>
    </location>
</feature>
<feature type="topological domain" description="Cytoplasmic" evidence="1">
    <location>
        <begin position="309"/>
        <end position="337"/>
    </location>
</feature>
<feature type="transmembrane region" description="Helical" evidence="1">
    <location>
        <begin position="338"/>
        <end position="358"/>
    </location>
</feature>
<feature type="topological domain" description="Periplasmic" evidence="1">
    <location>
        <begin position="359"/>
        <end position="360"/>
    </location>
</feature>
<name>MRAY_SALPB</name>
<evidence type="ECO:0000255" key="1">
    <source>
        <dbReference type="HAMAP-Rule" id="MF_00038"/>
    </source>
</evidence>
<proteinExistence type="inferred from homology"/>
<gene>
    <name evidence="1" type="primary">mraY</name>
    <name type="ordered locus">SPAB_00159</name>
</gene>
<protein>
    <recommendedName>
        <fullName evidence="1">Phospho-N-acetylmuramoyl-pentapeptide-transferase</fullName>
        <ecNumber evidence="1">2.7.8.13</ecNumber>
    </recommendedName>
    <alternativeName>
        <fullName evidence="1">UDP-MurNAc-pentapeptide phosphotransferase</fullName>
    </alternativeName>
</protein>
<dbReference type="EC" id="2.7.8.13" evidence="1"/>
<dbReference type="EMBL" id="CP000886">
    <property type="protein sequence ID" value="ABX65601.1"/>
    <property type="molecule type" value="Genomic_DNA"/>
</dbReference>
<dbReference type="RefSeq" id="WP_000964138.1">
    <property type="nucleotide sequence ID" value="NC_010102.1"/>
</dbReference>
<dbReference type="SMR" id="A9MZL6"/>
<dbReference type="KEGG" id="spq:SPAB_00159"/>
<dbReference type="PATRIC" id="fig|1016998.12.peg.151"/>
<dbReference type="HOGENOM" id="CLU_023982_0_0_6"/>
<dbReference type="BioCyc" id="SENT1016998:SPAB_RS00625-MONOMER"/>
<dbReference type="UniPathway" id="UPA00219"/>
<dbReference type="Proteomes" id="UP000008556">
    <property type="component" value="Chromosome"/>
</dbReference>
<dbReference type="GO" id="GO:0005886">
    <property type="term" value="C:plasma membrane"/>
    <property type="evidence" value="ECO:0007669"/>
    <property type="project" value="UniProtKB-SubCell"/>
</dbReference>
<dbReference type="GO" id="GO:0046872">
    <property type="term" value="F:metal ion binding"/>
    <property type="evidence" value="ECO:0007669"/>
    <property type="project" value="UniProtKB-KW"/>
</dbReference>
<dbReference type="GO" id="GO:0008963">
    <property type="term" value="F:phospho-N-acetylmuramoyl-pentapeptide-transferase activity"/>
    <property type="evidence" value="ECO:0007669"/>
    <property type="project" value="UniProtKB-UniRule"/>
</dbReference>
<dbReference type="GO" id="GO:0051992">
    <property type="term" value="F:UDP-N-acetylmuramoyl-L-alanyl-D-glutamyl-meso-2,6-diaminopimelyl-D-alanyl-D-alanine:undecaprenyl-phosphate transferase activity"/>
    <property type="evidence" value="ECO:0007669"/>
    <property type="project" value="RHEA"/>
</dbReference>
<dbReference type="GO" id="GO:0051301">
    <property type="term" value="P:cell division"/>
    <property type="evidence" value="ECO:0007669"/>
    <property type="project" value="UniProtKB-KW"/>
</dbReference>
<dbReference type="GO" id="GO:0071555">
    <property type="term" value="P:cell wall organization"/>
    <property type="evidence" value="ECO:0007669"/>
    <property type="project" value="UniProtKB-KW"/>
</dbReference>
<dbReference type="GO" id="GO:0009252">
    <property type="term" value="P:peptidoglycan biosynthetic process"/>
    <property type="evidence" value="ECO:0007669"/>
    <property type="project" value="UniProtKB-UniRule"/>
</dbReference>
<dbReference type="GO" id="GO:0008360">
    <property type="term" value="P:regulation of cell shape"/>
    <property type="evidence" value="ECO:0007669"/>
    <property type="project" value="UniProtKB-KW"/>
</dbReference>
<dbReference type="CDD" id="cd06852">
    <property type="entry name" value="GT_MraY"/>
    <property type="match status" value="1"/>
</dbReference>
<dbReference type="HAMAP" id="MF_00038">
    <property type="entry name" value="MraY"/>
    <property type="match status" value="1"/>
</dbReference>
<dbReference type="InterPro" id="IPR000715">
    <property type="entry name" value="Glycosyl_transferase_4"/>
</dbReference>
<dbReference type="InterPro" id="IPR003524">
    <property type="entry name" value="PNAcMuramoyl-5peptid_Trfase"/>
</dbReference>
<dbReference type="InterPro" id="IPR018480">
    <property type="entry name" value="PNAcMuramoyl-5peptid_Trfase_CS"/>
</dbReference>
<dbReference type="NCBIfam" id="TIGR00445">
    <property type="entry name" value="mraY"/>
    <property type="match status" value="1"/>
</dbReference>
<dbReference type="PANTHER" id="PTHR22926">
    <property type="entry name" value="PHOSPHO-N-ACETYLMURAMOYL-PENTAPEPTIDE-TRANSFERASE"/>
    <property type="match status" value="1"/>
</dbReference>
<dbReference type="PANTHER" id="PTHR22926:SF5">
    <property type="entry name" value="PHOSPHO-N-ACETYLMURAMOYL-PENTAPEPTIDE-TRANSFERASE HOMOLOG"/>
    <property type="match status" value="1"/>
</dbReference>
<dbReference type="Pfam" id="PF00953">
    <property type="entry name" value="Glycos_transf_4"/>
    <property type="match status" value="1"/>
</dbReference>
<dbReference type="Pfam" id="PF10555">
    <property type="entry name" value="MraY_sig1"/>
    <property type="match status" value="1"/>
</dbReference>
<dbReference type="PROSITE" id="PS01347">
    <property type="entry name" value="MRAY_1"/>
    <property type="match status" value="1"/>
</dbReference>
<dbReference type="PROSITE" id="PS01348">
    <property type="entry name" value="MRAY_2"/>
    <property type="match status" value="1"/>
</dbReference>
<keyword id="KW-0131">Cell cycle</keyword>
<keyword id="KW-0132">Cell division</keyword>
<keyword id="KW-0997">Cell inner membrane</keyword>
<keyword id="KW-1003">Cell membrane</keyword>
<keyword id="KW-0133">Cell shape</keyword>
<keyword id="KW-0961">Cell wall biogenesis/degradation</keyword>
<keyword id="KW-0460">Magnesium</keyword>
<keyword id="KW-0472">Membrane</keyword>
<keyword id="KW-0479">Metal-binding</keyword>
<keyword id="KW-0573">Peptidoglycan synthesis</keyword>
<keyword id="KW-0808">Transferase</keyword>
<keyword id="KW-0812">Transmembrane</keyword>
<keyword id="KW-1133">Transmembrane helix</keyword>
<accession>A9MZL6</accession>
<sequence>MLVWLAEHLVKYYSGFNVFSYLTFRAIVSLLTALFISLWMGPRMIARLQKLSFGQVVRNDGPESHFSKRGTPTMGGIMILTAIVISVLLWAYPSNPYVWCVLVVLIGYGIIGFVDDYRKVVRKDTKGLIARWKYFWMSVIALGVAFALYLVGKDTPATQLVVPFFKDVMPQLGLFYILLSYFVIVGTGNAVNLTDGLDGLAIMPTVFVAAGFALVAWATGNMNFANYLHIPYLRHAGELVIVCTAIVGAGLGFLWFNTYPAQVFMGDVGSLALGGALGIIAVLLRQEFLLVIMGGVFVVETLSVILQVGSFKLRGQRIFRMAPIHHHYELKGWPEPRVIVRFWIISLMLVLIGLATLKVR</sequence>
<comment type="function">
    <text evidence="1">Catalyzes the initial step of the lipid cycle reactions in the biosynthesis of the cell wall peptidoglycan: transfers peptidoglycan precursor phospho-MurNAc-pentapeptide from UDP-MurNAc-pentapeptide onto the lipid carrier undecaprenyl phosphate, yielding undecaprenyl-pyrophosphoryl-MurNAc-pentapeptide, known as lipid I.</text>
</comment>
<comment type="catalytic activity">
    <reaction evidence="1">
        <text>UDP-N-acetyl-alpha-D-muramoyl-L-alanyl-gamma-D-glutamyl-meso-2,6-diaminopimeloyl-D-alanyl-D-alanine + di-trans,octa-cis-undecaprenyl phosphate = di-trans,octa-cis-undecaprenyl diphospho-N-acetyl-alpha-D-muramoyl-L-alanyl-D-glutamyl-meso-2,6-diaminopimeloyl-D-alanyl-D-alanine + UMP</text>
        <dbReference type="Rhea" id="RHEA:28386"/>
        <dbReference type="ChEBI" id="CHEBI:57865"/>
        <dbReference type="ChEBI" id="CHEBI:60392"/>
        <dbReference type="ChEBI" id="CHEBI:61386"/>
        <dbReference type="ChEBI" id="CHEBI:61387"/>
        <dbReference type="EC" id="2.7.8.13"/>
    </reaction>
</comment>
<comment type="cofactor">
    <cofactor evidence="1">
        <name>Mg(2+)</name>
        <dbReference type="ChEBI" id="CHEBI:18420"/>
    </cofactor>
</comment>
<comment type="pathway">
    <text evidence="1">Cell wall biogenesis; peptidoglycan biosynthesis.</text>
</comment>
<comment type="subcellular location">
    <subcellularLocation>
        <location evidence="1">Cell inner membrane</location>
        <topology evidence="1">Multi-pass membrane protein</topology>
    </subcellularLocation>
</comment>
<comment type="similarity">
    <text evidence="1">Belongs to the glycosyltransferase 4 family. MraY subfamily.</text>
</comment>